<comment type="function">
    <text evidence="2 3">Lanthionine-containing peptide antibiotic (lantibiotic) only active on Gram-positive bacteria in synergy with Flvbeta peptides, which are encoded by the same operon than Flvalpha.a. Shows antibacterial activity in synergy with Flvbeta.b, Flvbeta.c, Flvbeta.e and Flvbeta.g. Does not show antibacterial activity when tested with Flvbeta.a, Flvbeta.d, Flvbeta.f and Flvbeta.h (By similarity). The bactericidal activity of lantibiotics is based on depolarization of energized bacterial cytoplasmic membranes, initiated by the formation of aqueous transmembrane pores (By similarity).</text>
</comment>
<comment type="subcellular location">
    <subcellularLocation>
        <location evidence="2">Secreted</location>
    </subcellularLocation>
</comment>
<comment type="PTM">
    <text evidence="2">The lanthionine formed by Ser-58 and Cys-68 forms a putative lipid II binding motif.</text>
</comment>
<comment type="PTM">
    <text evidence="1 2">Maturation of FlvA1 peptides involves the enzymatic conversion of Thr, and Ser into dehydrated AA and the formation of thioether bonds with cysteines. Modifications are processed by the flavecin synthetase FlvM1 (By similarity). This is followed by membrane translocation and cleavage of the modified precursor (By similarity).</text>
</comment>
<comment type="PTM">
    <text evidence="2">Contains DL-lanthionine and DL-beta-methyllanthionine, when coepressed in E.coli with the flavecin synthetase FlvM1.</text>
</comment>
<evidence type="ECO:0000250" key="1">
    <source>
        <dbReference type="UniProtKB" id="H2A7G5"/>
    </source>
</evidence>
<evidence type="ECO:0000250" key="2">
    <source>
        <dbReference type="UniProtKB" id="P0DQM1"/>
    </source>
</evidence>
<evidence type="ECO:0000250" key="3">
    <source>
        <dbReference type="UniProtKB" id="P86475"/>
    </source>
</evidence>
<evidence type="ECO:0000303" key="4">
    <source>
    </source>
</evidence>
<evidence type="ECO:0000305" key="5">
    <source>
    </source>
</evidence>
<organism>
    <name type="scientific">Ruminococcus flavefaciens</name>
    <dbReference type="NCBI Taxonomy" id="1265"/>
    <lineage>
        <taxon>Bacteria</taxon>
        <taxon>Bacillati</taxon>
        <taxon>Bacillota</taxon>
        <taxon>Clostridia</taxon>
        <taxon>Eubacteriales</taxon>
        <taxon>Oscillospiraceae</taxon>
        <taxon>Ruminococcus</taxon>
    </lineage>
</organism>
<dbReference type="GO" id="GO:0005576">
    <property type="term" value="C:extracellular region"/>
    <property type="evidence" value="ECO:0007669"/>
    <property type="project" value="UniProtKB-SubCell"/>
</dbReference>
<dbReference type="GO" id="GO:0008289">
    <property type="term" value="F:lipid binding"/>
    <property type="evidence" value="ECO:0007669"/>
    <property type="project" value="UniProtKB-KW"/>
</dbReference>
<dbReference type="GO" id="GO:0005102">
    <property type="term" value="F:signaling receptor binding"/>
    <property type="evidence" value="ECO:0007669"/>
    <property type="project" value="UniProtKB-KW"/>
</dbReference>
<dbReference type="GO" id="GO:0042742">
    <property type="term" value="P:defense response to bacterium"/>
    <property type="evidence" value="ECO:0007669"/>
    <property type="project" value="UniProtKB-KW"/>
</dbReference>
<dbReference type="GO" id="GO:0031640">
    <property type="term" value="P:killing of cells of another organism"/>
    <property type="evidence" value="ECO:0007669"/>
    <property type="project" value="UniProtKB-KW"/>
</dbReference>
<dbReference type="NCBIfam" id="NF000539">
    <property type="entry name" value="plantaricin"/>
    <property type="match status" value="1"/>
</dbReference>
<sequence length="80" mass="8443">MNKNPIYRSEEEAKNIACGNVAAELDENSQALDAINGAGWKQTIACTIAQGTLGCLVSYGLGNGGYCCTYTVECSKTCNK</sequence>
<feature type="propeptide" id="PRO_0000450392" description="Cleaved by FlvT" evidence="5">
    <location>
        <begin position="1"/>
        <end position="38"/>
    </location>
</feature>
<feature type="peptide" id="PRO_0000450393" description="Lantibiotic Flvalpha.c" evidence="5">
    <location>
        <begin position="39"/>
        <end position="80"/>
    </location>
</feature>
<feature type="modified residue" description="2,3-didehydrobutyrine; by FlvM1" evidence="2">
    <location>
        <position position="43"/>
    </location>
</feature>
<feature type="modified residue" description="2,3-didehydrobutyrine; by FlvM1" evidence="2">
    <location>
        <position position="47"/>
    </location>
</feature>
<feature type="cross-link" description="Beta-methyllanthionine (Thr-Cys); by FlvM1" evidence="2">
    <location>
        <begin position="52"/>
        <end position="55"/>
    </location>
</feature>
<feature type="cross-link" description="Lanthionine (Ser-Cys); by FlvM1" evidence="2">
    <location>
        <begin position="58"/>
        <end position="68"/>
    </location>
</feature>
<feature type="cross-link" description="Beta-methyllanthionine (Thr-Cys); by FlvM1" evidence="2">
    <location>
        <begin position="69"/>
        <end position="74"/>
    </location>
</feature>
<feature type="cross-link" description="Beta-methyllanthionine (Thr-Cys); by FlvM1" evidence="2">
    <location>
        <begin position="71"/>
        <end position="78"/>
    </location>
</feature>
<accession>P0DQM3</accession>
<proteinExistence type="inferred from homology"/>
<gene>
    <name evidence="4" type="primary">FlvA1.C</name>
</gene>
<protein>
    <recommendedName>
        <fullName evidence="4">Lantibiotic Flvalpha.c</fullName>
    </recommendedName>
</protein>
<reference key="1">
    <citation type="journal article" date="2016" name="Cell Chem. Biol.">
        <title>Structural characterization and bioactivity analysis of the two-component lantibiotic Flv system from a ruminant bacterium.</title>
        <authorList>
            <person name="Zhao X."/>
            <person name="van der Donk W.A."/>
        </authorList>
    </citation>
    <scope>NUCLEOTIDE SEQUENCE [GENOMIC DNA]</scope>
    <source>
        <strain>FD-1</strain>
    </source>
</reference>
<keyword id="KW-0044">Antibiotic</keyword>
<keyword id="KW-0929">Antimicrobial</keyword>
<keyword id="KW-0078">Bacteriocin</keyword>
<keyword id="KW-0425">Lantibiotic</keyword>
<keyword id="KW-0446">Lipid-binding</keyword>
<keyword id="KW-0964">Secreted</keyword>
<keyword id="KW-0883">Thioether bond</keyword>
<name>LAN1C_RUMFL</name>